<comment type="function">
    <text evidence="1">Involved in the biosynthesis of the chorismate, which leads to the biosynthesis of aromatic amino acids. Catalyzes the reversible NADPH linked reduction of 3-dehydroshikimate (DHSA) to yield shikimate (SA).</text>
</comment>
<comment type="catalytic activity">
    <reaction evidence="1">
        <text>shikimate + NADP(+) = 3-dehydroshikimate + NADPH + H(+)</text>
        <dbReference type="Rhea" id="RHEA:17737"/>
        <dbReference type="ChEBI" id="CHEBI:15378"/>
        <dbReference type="ChEBI" id="CHEBI:16630"/>
        <dbReference type="ChEBI" id="CHEBI:36208"/>
        <dbReference type="ChEBI" id="CHEBI:57783"/>
        <dbReference type="ChEBI" id="CHEBI:58349"/>
        <dbReference type="EC" id="1.1.1.25"/>
    </reaction>
</comment>
<comment type="pathway">
    <text evidence="1">Metabolic intermediate biosynthesis; chorismate biosynthesis; chorismate from D-erythrose 4-phosphate and phosphoenolpyruvate: step 4/7.</text>
</comment>
<comment type="subunit">
    <text evidence="1">Homodimer.</text>
</comment>
<comment type="similarity">
    <text evidence="1">Belongs to the shikimate dehydrogenase family.</text>
</comment>
<keyword id="KW-0028">Amino-acid biosynthesis</keyword>
<keyword id="KW-0057">Aromatic amino acid biosynthesis</keyword>
<keyword id="KW-0521">NADP</keyword>
<keyword id="KW-0560">Oxidoreductase</keyword>
<keyword id="KW-1185">Reference proteome</keyword>
<accession>A8MCY4</accession>
<protein>
    <recommendedName>
        <fullName evidence="1">Shikimate dehydrogenase (NADP(+))</fullName>
        <shortName evidence="1">SDH</shortName>
        <ecNumber evidence="1">1.1.1.25</ecNumber>
    </recommendedName>
</protein>
<reference key="1">
    <citation type="submission" date="2007-10" db="EMBL/GenBank/DDBJ databases">
        <title>Complete sequence of Caldivirga maquilingensis IC-167.</title>
        <authorList>
            <consortium name="US DOE Joint Genome Institute"/>
            <person name="Copeland A."/>
            <person name="Lucas S."/>
            <person name="Lapidus A."/>
            <person name="Barry K."/>
            <person name="Glavina del Rio T."/>
            <person name="Dalin E."/>
            <person name="Tice H."/>
            <person name="Pitluck S."/>
            <person name="Saunders E."/>
            <person name="Brettin T."/>
            <person name="Bruce D."/>
            <person name="Detter J.C."/>
            <person name="Han C."/>
            <person name="Schmutz J."/>
            <person name="Larimer F."/>
            <person name="Land M."/>
            <person name="Hauser L."/>
            <person name="Kyrpides N."/>
            <person name="Ivanova N."/>
            <person name="Biddle J.F."/>
            <person name="Zhang Z."/>
            <person name="Fitz-Gibbon S.T."/>
            <person name="Lowe T.M."/>
            <person name="Saltikov C."/>
            <person name="House C.H."/>
            <person name="Richardson P."/>
        </authorList>
    </citation>
    <scope>NUCLEOTIDE SEQUENCE [LARGE SCALE GENOMIC DNA]</scope>
    <source>
        <strain>ATCC 700844 / DSM 13496 / JCM 10307 / IC-167</strain>
    </source>
</reference>
<name>AROE_CALMQ</name>
<dbReference type="EC" id="1.1.1.25" evidence="1"/>
<dbReference type="EMBL" id="CP000852">
    <property type="protein sequence ID" value="ABW01640.1"/>
    <property type="molecule type" value="Genomic_DNA"/>
</dbReference>
<dbReference type="RefSeq" id="WP_012185859.1">
    <property type="nucleotide sequence ID" value="NC_009954.1"/>
</dbReference>
<dbReference type="SMR" id="A8MCY4"/>
<dbReference type="STRING" id="397948.Cmaq_0805"/>
<dbReference type="GeneID" id="5708718"/>
<dbReference type="KEGG" id="cma:Cmaq_0805"/>
<dbReference type="eggNOG" id="arCOG01033">
    <property type="taxonomic scope" value="Archaea"/>
</dbReference>
<dbReference type="HOGENOM" id="CLU_044063_0_1_2"/>
<dbReference type="OrthoDB" id="8744at2157"/>
<dbReference type="UniPathway" id="UPA00053">
    <property type="reaction ID" value="UER00087"/>
</dbReference>
<dbReference type="Proteomes" id="UP000001137">
    <property type="component" value="Chromosome"/>
</dbReference>
<dbReference type="GO" id="GO:0004764">
    <property type="term" value="F:shikimate 3-dehydrogenase (NADP+) activity"/>
    <property type="evidence" value="ECO:0007669"/>
    <property type="project" value="UniProtKB-UniRule"/>
</dbReference>
<dbReference type="GO" id="GO:0008652">
    <property type="term" value="P:amino acid biosynthetic process"/>
    <property type="evidence" value="ECO:0007669"/>
    <property type="project" value="UniProtKB-KW"/>
</dbReference>
<dbReference type="GO" id="GO:0009073">
    <property type="term" value="P:aromatic amino acid family biosynthetic process"/>
    <property type="evidence" value="ECO:0007669"/>
    <property type="project" value="UniProtKB-KW"/>
</dbReference>
<dbReference type="GO" id="GO:0009423">
    <property type="term" value="P:chorismate biosynthetic process"/>
    <property type="evidence" value="ECO:0007669"/>
    <property type="project" value="UniProtKB-UniRule"/>
</dbReference>
<dbReference type="GO" id="GO:0019632">
    <property type="term" value="P:shikimate metabolic process"/>
    <property type="evidence" value="ECO:0007669"/>
    <property type="project" value="TreeGrafter"/>
</dbReference>
<dbReference type="CDD" id="cd01065">
    <property type="entry name" value="NAD_bind_Shikimate_DH"/>
    <property type="match status" value="1"/>
</dbReference>
<dbReference type="Gene3D" id="3.40.50.10860">
    <property type="entry name" value="Leucine Dehydrogenase, chain A, domain 1"/>
    <property type="match status" value="1"/>
</dbReference>
<dbReference type="Gene3D" id="3.40.50.720">
    <property type="entry name" value="NAD(P)-binding Rossmann-like Domain"/>
    <property type="match status" value="1"/>
</dbReference>
<dbReference type="HAMAP" id="MF_00222">
    <property type="entry name" value="Shikimate_DH_AroE"/>
    <property type="match status" value="1"/>
</dbReference>
<dbReference type="InterPro" id="IPR046346">
    <property type="entry name" value="Aminoacid_DH-like_N_sf"/>
</dbReference>
<dbReference type="InterPro" id="IPR036291">
    <property type="entry name" value="NAD(P)-bd_dom_sf"/>
</dbReference>
<dbReference type="InterPro" id="IPR013708">
    <property type="entry name" value="Shikimate_DH-bd_N"/>
</dbReference>
<dbReference type="InterPro" id="IPR022893">
    <property type="entry name" value="Shikimate_DH_fam"/>
</dbReference>
<dbReference type="InterPro" id="IPR006151">
    <property type="entry name" value="Shikm_DH/Glu-tRNA_Rdtase"/>
</dbReference>
<dbReference type="PANTHER" id="PTHR21089:SF1">
    <property type="entry name" value="BIFUNCTIONAL 3-DEHYDROQUINATE DEHYDRATASE_SHIKIMATE DEHYDROGENASE, CHLOROPLASTIC"/>
    <property type="match status" value="1"/>
</dbReference>
<dbReference type="PANTHER" id="PTHR21089">
    <property type="entry name" value="SHIKIMATE DEHYDROGENASE"/>
    <property type="match status" value="1"/>
</dbReference>
<dbReference type="Pfam" id="PF01488">
    <property type="entry name" value="Shikimate_DH"/>
    <property type="match status" value="1"/>
</dbReference>
<dbReference type="Pfam" id="PF08501">
    <property type="entry name" value="Shikimate_dh_N"/>
    <property type="match status" value="1"/>
</dbReference>
<dbReference type="SUPFAM" id="SSF53223">
    <property type="entry name" value="Aminoacid dehydrogenase-like, N-terminal domain"/>
    <property type="match status" value="1"/>
</dbReference>
<dbReference type="SUPFAM" id="SSF51735">
    <property type="entry name" value="NAD(P)-binding Rossmann-fold domains"/>
    <property type="match status" value="1"/>
</dbReference>
<proteinExistence type="inferred from homology"/>
<evidence type="ECO:0000255" key="1">
    <source>
        <dbReference type="HAMAP-Rule" id="MF_00222"/>
    </source>
</evidence>
<sequence length="269" mass="29480">MHVFGLIGYPLNYTLSPQIHNYVFKRLRIDAAYVPLRVASKRLLHFIEFSRDALSGFNVTIPHKVAVAKLIDELNDDADTIKSVNTVVNSNQKLIGYNTDYVAVEESLIERGYKGEEALLIGAGGAARAVVLALSKTGCRAIKVLNRSRERAVELCGLANGLGLDCSVVDIGGNYGKPHVIINATPLSSEEYWLLNLGELGTMLLLDMAYKPNTETDLIKRARELGIQVIDGVEILVRQALAADKLWLGDFNEPSASEVIKYIKGINPS</sequence>
<gene>
    <name evidence="1" type="primary">aroE</name>
    <name type="ordered locus">Cmaq_0805</name>
</gene>
<organism>
    <name type="scientific">Caldivirga maquilingensis (strain ATCC 700844 / DSM 13496 / JCM 10307 / IC-167)</name>
    <dbReference type="NCBI Taxonomy" id="397948"/>
    <lineage>
        <taxon>Archaea</taxon>
        <taxon>Thermoproteota</taxon>
        <taxon>Thermoprotei</taxon>
        <taxon>Thermoproteales</taxon>
        <taxon>Thermoproteaceae</taxon>
        <taxon>Caldivirga</taxon>
    </lineage>
</organism>
<feature type="chain" id="PRO_1000100107" description="Shikimate dehydrogenase (NADP(+))">
    <location>
        <begin position="1"/>
        <end position="269"/>
    </location>
</feature>
<feature type="active site" description="Proton acceptor" evidence="1">
    <location>
        <position position="64"/>
    </location>
</feature>
<feature type="binding site" evidence="1">
    <location>
        <begin position="14"/>
        <end position="16"/>
    </location>
    <ligand>
        <name>shikimate</name>
        <dbReference type="ChEBI" id="CHEBI:36208"/>
    </ligand>
</feature>
<feature type="binding site" evidence="1">
    <location>
        <position position="60"/>
    </location>
    <ligand>
        <name>shikimate</name>
        <dbReference type="ChEBI" id="CHEBI:36208"/>
    </ligand>
</feature>
<feature type="binding site" evidence="1">
    <location>
        <position position="76"/>
    </location>
    <ligand>
        <name>NADP(+)</name>
        <dbReference type="ChEBI" id="CHEBI:58349"/>
    </ligand>
</feature>
<feature type="binding site" evidence="1">
    <location>
        <position position="85"/>
    </location>
    <ligand>
        <name>shikimate</name>
        <dbReference type="ChEBI" id="CHEBI:36208"/>
    </ligand>
</feature>
<feature type="binding site" evidence="1">
    <location>
        <position position="100"/>
    </location>
    <ligand>
        <name>shikimate</name>
        <dbReference type="ChEBI" id="CHEBI:36208"/>
    </ligand>
</feature>
<feature type="binding site" evidence="1">
    <location>
        <begin position="122"/>
        <end position="126"/>
    </location>
    <ligand>
        <name>NADP(+)</name>
        <dbReference type="ChEBI" id="CHEBI:58349"/>
    </ligand>
</feature>
<feature type="binding site" evidence="1">
    <location>
        <position position="208"/>
    </location>
    <ligand>
        <name>NADP(+)</name>
        <dbReference type="ChEBI" id="CHEBI:58349"/>
    </ligand>
</feature>
<feature type="binding site" evidence="1">
    <location>
        <position position="210"/>
    </location>
    <ligand>
        <name>shikimate</name>
        <dbReference type="ChEBI" id="CHEBI:36208"/>
    </ligand>
</feature>
<feature type="binding site" evidence="1">
    <location>
        <position position="232"/>
    </location>
    <ligand>
        <name>NADP(+)</name>
        <dbReference type="ChEBI" id="CHEBI:58349"/>
    </ligand>
</feature>